<sequence length="177" mass="21178">MKLPKEGDFITIQSYKHDGSLHRTWRDTMVLKTTENALIGVNDHTLVTESDGRRWVTREPAIVYFHKKYWFNIIAMIRDNGVSYYCNLASPYMMDTEALKYIDYDLDVKVFADGEKRLLDVDEYEIHKKEMQYSADMDFILKENVKILVDWINHEKGPFSKAYITIWYKRYLELKNR</sequence>
<accession>Q7CMZ3</accession>
<evidence type="ECO:0000255" key="1">
    <source>
        <dbReference type="HAMAP-Rule" id="MF_01568"/>
    </source>
</evidence>
<proteinExistence type="inferred from homology"/>
<feature type="chain" id="PRO_0000248124" description="Nucleoside triphosphate/diphosphate phosphatase">
    <location>
        <begin position="1"/>
        <end position="177"/>
    </location>
</feature>
<feature type="active site" description="Proton donor" evidence="1">
    <location>
        <position position="23"/>
    </location>
</feature>
<feature type="binding site" evidence="1">
    <location>
        <position position="87"/>
    </location>
    <ligand>
        <name>Mg(2+)</name>
        <dbReference type="ChEBI" id="CHEBI:18420"/>
        <label>1</label>
    </ligand>
</feature>
<feature type="binding site" evidence="1">
    <location>
        <position position="103"/>
    </location>
    <ligand>
        <name>Mg(2+)</name>
        <dbReference type="ChEBI" id="CHEBI:18420"/>
        <label>1</label>
    </ligand>
</feature>
<feature type="binding site" evidence="1">
    <location>
        <position position="105"/>
    </location>
    <ligand>
        <name>Mg(2+)</name>
        <dbReference type="ChEBI" id="CHEBI:18420"/>
        <label>2</label>
    </ligand>
</feature>
<feature type="binding site" evidence="1">
    <location>
        <position position="107"/>
    </location>
    <ligand>
        <name>Mg(2+)</name>
        <dbReference type="ChEBI" id="CHEBI:18420"/>
        <label>1</label>
    </ligand>
</feature>
<feature type="binding site" evidence="1">
    <location>
        <position position="107"/>
    </location>
    <ligand>
        <name>Mg(2+)</name>
        <dbReference type="ChEBI" id="CHEBI:18420"/>
        <label>2</label>
    </ligand>
</feature>
<feature type="binding site" evidence="1">
    <location>
        <position position="120"/>
    </location>
    <ligand>
        <name>Mg(2+)</name>
        <dbReference type="ChEBI" id="CHEBI:18420"/>
        <label>2</label>
    </ligand>
</feature>
<feature type="binding site" evidence="1">
    <location>
        <position position="123"/>
    </location>
    <ligand>
        <name>Mg(2+)</name>
        <dbReference type="ChEBI" id="CHEBI:18420"/>
        <label>2</label>
    </ligand>
</feature>
<comment type="function">
    <text evidence="1">Has nucleoside phosphatase activity towards nucleoside triphosphates and nucleoside diphosphates.</text>
</comment>
<comment type="catalytic activity">
    <reaction evidence="1">
        <text>a ribonucleoside 5'-triphosphate + H2O = a ribonucleoside 5'-diphosphate + phosphate + H(+)</text>
        <dbReference type="Rhea" id="RHEA:23680"/>
        <dbReference type="ChEBI" id="CHEBI:15377"/>
        <dbReference type="ChEBI" id="CHEBI:15378"/>
        <dbReference type="ChEBI" id="CHEBI:43474"/>
        <dbReference type="ChEBI" id="CHEBI:57930"/>
        <dbReference type="ChEBI" id="CHEBI:61557"/>
        <dbReference type="EC" id="3.6.1.15"/>
    </reaction>
</comment>
<comment type="catalytic activity">
    <reaction evidence="1">
        <text>a ribonucleoside 5'-diphosphate + H2O = a ribonucleoside 5'-phosphate + phosphate + H(+)</text>
        <dbReference type="Rhea" id="RHEA:36799"/>
        <dbReference type="ChEBI" id="CHEBI:15377"/>
        <dbReference type="ChEBI" id="CHEBI:15378"/>
        <dbReference type="ChEBI" id="CHEBI:43474"/>
        <dbReference type="ChEBI" id="CHEBI:57930"/>
        <dbReference type="ChEBI" id="CHEBI:58043"/>
        <dbReference type="EC" id="3.6.1.6"/>
    </reaction>
</comment>
<comment type="cofactor">
    <cofactor evidence="1">
        <name>Mg(2+)</name>
        <dbReference type="ChEBI" id="CHEBI:18420"/>
    </cofactor>
</comment>
<comment type="similarity">
    <text evidence="1">Belongs to the Ntdp family.</text>
</comment>
<name>NTDP_STRP8</name>
<reference key="1">
    <citation type="journal article" date="2002" name="Proc. Natl. Acad. Sci. U.S.A.">
        <title>Genome sequence and comparative microarray analysis of serotype M18 group A Streptococcus strains associated with acute rheumatic fever outbreaks.</title>
        <authorList>
            <person name="Smoot J.C."/>
            <person name="Barbian K.D."/>
            <person name="Van Gompel J.J."/>
            <person name="Smoot L.M."/>
            <person name="Chaussee M.S."/>
            <person name="Sylva G.L."/>
            <person name="Sturdevant D.E."/>
            <person name="Ricklefs S.M."/>
            <person name="Porcella S.F."/>
            <person name="Parkins L.D."/>
            <person name="Beres S.B."/>
            <person name="Campbell D.S."/>
            <person name="Smith T.M."/>
            <person name="Zhang Q."/>
            <person name="Kapur V."/>
            <person name="Daly J.A."/>
            <person name="Veasy L.G."/>
            <person name="Musser J.M."/>
        </authorList>
    </citation>
    <scope>NUCLEOTIDE SEQUENCE [LARGE SCALE GENOMIC DNA]</scope>
    <source>
        <strain>MGAS8232</strain>
    </source>
</reference>
<organism>
    <name type="scientific">Streptococcus pyogenes serotype M18 (strain MGAS8232)</name>
    <dbReference type="NCBI Taxonomy" id="186103"/>
    <lineage>
        <taxon>Bacteria</taxon>
        <taxon>Bacillati</taxon>
        <taxon>Bacillota</taxon>
        <taxon>Bacilli</taxon>
        <taxon>Lactobacillales</taxon>
        <taxon>Streptococcaceae</taxon>
        <taxon>Streptococcus</taxon>
    </lineage>
</organism>
<keyword id="KW-0378">Hydrolase</keyword>
<keyword id="KW-0460">Magnesium</keyword>
<keyword id="KW-0479">Metal-binding</keyword>
<dbReference type="EC" id="3.6.1.15" evidence="1"/>
<dbReference type="EC" id="3.6.1.6" evidence="1"/>
<dbReference type="EMBL" id="AE009949">
    <property type="protein sequence ID" value="AAL98170.1"/>
    <property type="molecule type" value="Genomic_DNA"/>
</dbReference>
<dbReference type="RefSeq" id="WP_002983693.1">
    <property type="nucleotide sequence ID" value="NC_003485.1"/>
</dbReference>
<dbReference type="SMR" id="Q7CMZ3"/>
<dbReference type="KEGG" id="spm:spyM18_1617"/>
<dbReference type="HOGENOM" id="CLU_109787_1_0_9"/>
<dbReference type="GO" id="GO:0000287">
    <property type="term" value="F:magnesium ion binding"/>
    <property type="evidence" value="ECO:0007669"/>
    <property type="project" value="UniProtKB-UniRule"/>
</dbReference>
<dbReference type="GO" id="GO:0017110">
    <property type="term" value="F:nucleoside diphosphate phosphatase activity"/>
    <property type="evidence" value="ECO:0007669"/>
    <property type="project" value="UniProtKB-UniRule"/>
</dbReference>
<dbReference type="GO" id="GO:0017111">
    <property type="term" value="F:ribonucleoside triphosphate phosphatase activity"/>
    <property type="evidence" value="ECO:0007669"/>
    <property type="project" value="UniProtKB-UniRule"/>
</dbReference>
<dbReference type="Gene3D" id="2.40.380.10">
    <property type="entry name" value="FomD-like"/>
    <property type="match status" value="1"/>
</dbReference>
<dbReference type="HAMAP" id="MF_01568">
    <property type="entry name" value="Ntdp"/>
    <property type="match status" value="1"/>
</dbReference>
<dbReference type="InterPro" id="IPR007295">
    <property type="entry name" value="DUF402"/>
</dbReference>
<dbReference type="InterPro" id="IPR035930">
    <property type="entry name" value="FomD-like_sf"/>
</dbReference>
<dbReference type="InterPro" id="IPR050212">
    <property type="entry name" value="Ntdp-like"/>
</dbReference>
<dbReference type="InterPro" id="IPR016882">
    <property type="entry name" value="SA1684"/>
</dbReference>
<dbReference type="NCBIfam" id="NF010183">
    <property type="entry name" value="PRK13662.1"/>
    <property type="match status" value="1"/>
</dbReference>
<dbReference type="PANTHER" id="PTHR39159">
    <property type="match status" value="1"/>
</dbReference>
<dbReference type="PANTHER" id="PTHR39159:SF1">
    <property type="entry name" value="UPF0374 PROTEIN YGAC"/>
    <property type="match status" value="1"/>
</dbReference>
<dbReference type="Pfam" id="PF04167">
    <property type="entry name" value="DUF402"/>
    <property type="match status" value="1"/>
</dbReference>
<dbReference type="PIRSF" id="PIRSF028345">
    <property type="entry name" value="UCP028345"/>
    <property type="match status" value="1"/>
</dbReference>
<dbReference type="SUPFAM" id="SSF159234">
    <property type="entry name" value="FomD-like"/>
    <property type="match status" value="1"/>
</dbReference>
<protein>
    <recommendedName>
        <fullName evidence="1">Nucleoside triphosphate/diphosphate phosphatase</fullName>
        <ecNumber evidence="1">3.6.1.15</ecNumber>
        <ecNumber evidence="1">3.6.1.6</ecNumber>
    </recommendedName>
</protein>
<gene>
    <name type="ordered locus">spyM18_1617</name>
</gene>